<organism>
    <name type="scientific">Coxiella burnetii (strain CbuG_Q212)</name>
    <name type="common">Coxiella burnetii (strain Q212)</name>
    <dbReference type="NCBI Taxonomy" id="434923"/>
    <lineage>
        <taxon>Bacteria</taxon>
        <taxon>Pseudomonadati</taxon>
        <taxon>Pseudomonadota</taxon>
        <taxon>Gammaproteobacteria</taxon>
        <taxon>Legionellales</taxon>
        <taxon>Coxiellaceae</taxon>
        <taxon>Coxiella</taxon>
    </lineage>
</organism>
<comment type="function">
    <text evidence="1">Condensation of UDP-2,3-diacylglucosamine and 2,3-diacylglucosamine-1-phosphate to form lipid A disaccharide, a precursor of lipid A, a phosphorylated glycolipid that anchors the lipopolysaccharide to the outer membrane of the cell.</text>
</comment>
<comment type="catalytic activity">
    <reaction evidence="1">
        <text>a lipid X + a UDP-2-N,3-O-bis[(3R)-3-hydroxyacyl]-alpha-D-glucosamine = a lipid A disaccharide + UDP + H(+)</text>
        <dbReference type="Rhea" id="RHEA:67828"/>
        <dbReference type="ChEBI" id="CHEBI:15378"/>
        <dbReference type="ChEBI" id="CHEBI:58223"/>
        <dbReference type="ChEBI" id="CHEBI:137748"/>
        <dbReference type="ChEBI" id="CHEBI:176338"/>
        <dbReference type="ChEBI" id="CHEBI:176343"/>
        <dbReference type="EC" id="2.4.1.182"/>
    </reaction>
</comment>
<comment type="pathway">
    <text evidence="1">Bacterial outer membrane biogenesis; LPS lipid A biosynthesis.</text>
</comment>
<comment type="similarity">
    <text evidence="1">Belongs to the LpxB family.</text>
</comment>
<protein>
    <recommendedName>
        <fullName evidence="1">Lipid-A-disaccharide synthase</fullName>
        <ecNumber evidence="1">2.4.1.182</ecNumber>
    </recommendedName>
</protein>
<evidence type="ECO:0000255" key="1">
    <source>
        <dbReference type="HAMAP-Rule" id="MF_00392"/>
    </source>
</evidence>
<keyword id="KW-0328">Glycosyltransferase</keyword>
<keyword id="KW-0441">Lipid A biosynthesis</keyword>
<keyword id="KW-0444">Lipid biosynthesis</keyword>
<keyword id="KW-0443">Lipid metabolism</keyword>
<keyword id="KW-0808">Transferase</keyword>
<reference key="1">
    <citation type="journal article" date="2009" name="Infect. Immun.">
        <title>Comparative genomics reveal extensive transposon-mediated genomic plasticity and diversity among potential effector proteins within the genus Coxiella.</title>
        <authorList>
            <person name="Beare P.A."/>
            <person name="Unsworth N."/>
            <person name="Andoh M."/>
            <person name="Voth D.E."/>
            <person name="Omsland A."/>
            <person name="Gilk S.D."/>
            <person name="Williams K.P."/>
            <person name="Sobral B.W."/>
            <person name="Kupko J.J. III"/>
            <person name="Porcella S.F."/>
            <person name="Samuel J.E."/>
            <person name="Heinzen R.A."/>
        </authorList>
    </citation>
    <scope>NUCLEOTIDE SEQUENCE [LARGE SCALE GENOMIC DNA]</scope>
    <source>
        <strain>CbuG_Q212</strain>
    </source>
</reference>
<accession>B6J161</accession>
<name>LPXB_COXB2</name>
<feature type="chain" id="PRO_1000191470" description="Lipid-A-disaccharide synthase">
    <location>
        <begin position="1"/>
        <end position="376"/>
    </location>
</feature>
<gene>
    <name evidence="1" type="primary">lpxB</name>
    <name type="ordered locus">CbuG_1383</name>
</gene>
<dbReference type="EC" id="2.4.1.182" evidence="1"/>
<dbReference type="EMBL" id="CP001019">
    <property type="protein sequence ID" value="ACJ18689.1"/>
    <property type="molecule type" value="Genomic_DNA"/>
</dbReference>
<dbReference type="RefSeq" id="WP_012570233.1">
    <property type="nucleotide sequence ID" value="NC_011527.1"/>
</dbReference>
<dbReference type="SMR" id="B6J161"/>
<dbReference type="CAZy" id="GT19">
    <property type="family name" value="Glycosyltransferase Family 19"/>
</dbReference>
<dbReference type="KEGG" id="cbg:CbuG_1383"/>
<dbReference type="HOGENOM" id="CLU_036577_3_1_6"/>
<dbReference type="UniPathway" id="UPA00973"/>
<dbReference type="GO" id="GO:0016020">
    <property type="term" value="C:membrane"/>
    <property type="evidence" value="ECO:0007669"/>
    <property type="project" value="GOC"/>
</dbReference>
<dbReference type="GO" id="GO:0008915">
    <property type="term" value="F:lipid-A-disaccharide synthase activity"/>
    <property type="evidence" value="ECO:0007669"/>
    <property type="project" value="UniProtKB-UniRule"/>
</dbReference>
<dbReference type="GO" id="GO:0005543">
    <property type="term" value="F:phospholipid binding"/>
    <property type="evidence" value="ECO:0007669"/>
    <property type="project" value="TreeGrafter"/>
</dbReference>
<dbReference type="GO" id="GO:0009245">
    <property type="term" value="P:lipid A biosynthetic process"/>
    <property type="evidence" value="ECO:0007669"/>
    <property type="project" value="UniProtKB-UniRule"/>
</dbReference>
<dbReference type="HAMAP" id="MF_00392">
    <property type="entry name" value="LpxB"/>
    <property type="match status" value="1"/>
</dbReference>
<dbReference type="InterPro" id="IPR003835">
    <property type="entry name" value="Glyco_trans_19"/>
</dbReference>
<dbReference type="NCBIfam" id="TIGR00215">
    <property type="entry name" value="lpxB"/>
    <property type="match status" value="1"/>
</dbReference>
<dbReference type="PANTHER" id="PTHR30372">
    <property type="entry name" value="LIPID-A-DISACCHARIDE SYNTHASE"/>
    <property type="match status" value="1"/>
</dbReference>
<dbReference type="PANTHER" id="PTHR30372:SF4">
    <property type="entry name" value="LIPID-A-DISACCHARIDE SYNTHASE, MITOCHONDRIAL-RELATED"/>
    <property type="match status" value="1"/>
</dbReference>
<dbReference type="Pfam" id="PF02684">
    <property type="entry name" value="LpxB"/>
    <property type="match status" value="1"/>
</dbReference>
<dbReference type="SUPFAM" id="SSF53756">
    <property type="entry name" value="UDP-Glycosyltransferase/glycogen phosphorylase"/>
    <property type="match status" value="1"/>
</dbReference>
<proteinExistence type="inferred from homology"/>
<sequence>MSNKSVLLIAGEPSGDLLGAHLAQSLKSLEPNLKLAGMGGKRMREAGVEVFINADKLAVVGLLEILRQFRDIRHAMQTLKRYFKKTPPDLVVFIDYPGFNLHMAKQAKKAGIKVLYYVSPQIWAWRYGRIKKIKKYVDHMAVLFDFEEKLYQKENVPVSFVGHPLANAPTPSLSRNEICKQFNLDPDKPIVALFPGSREQEINKLLPMMVQAGKLIQTQIPTVQFILPLALNLALDKIRPFLSPEIKVIQNDISHVLAIAHAAVAASGTVTLEIALQQVPLVIIYKVAPLTFWLGKKLIRLSFIGLCNLVSPEPVAVELLQQDATPQAIADEVFQLLNNHNYRQSIIGKLGHLRPQLDRGNAAQNVAKVIHNLIFS</sequence>